<name>DAPB_BUCAP</name>
<accession>Q8K9Z5</accession>
<gene>
    <name evidence="1" type="primary">dapB</name>
    <name type="ordered locus">BUsg_139</name>
</gene>
<organism>
    <name type="scientific">Buchnera aphidicola subsp. Schizaphis graminum (strain Sg)</name>
    <dbReference type="NCBI Taxonomy" id="198804"/>
    <lineage>
        <taxon>Bacteria</taxon>
        <taxon>Pseudomonadati</taxon>
        <taxon>Pseudomonadota</taxon>
        <taxon>Gammaproteobacteria</taxon>
        <taxon>Enterobacterales</taxon>
        <taxon>Erwiniaceae</taxon>
        <taxon>Buchnera</taxon>
    </lineage>
</organism>
<evidence type="ECO:0000255" key="1">
    <source>
        <dbReference type="HAMAP-Rule" id="MF_00102"/>
    </source>
</evidence>
<evidence type="ECO:0000305" key="2"/>
<reference key="1">
    <citation type="journal article" date="2002" name="Science">
        <title>50 million years of genomic stasis in endosymbiotic bacteria.</title>
        <authorList>
            <person name="Tamas I."/>
            <person name="Klasson L."/>
            <person name="Canbaeck B."/>
            <person name="Naeslund A.K."/>
            <person name="Eriksson A.-S."/>
            <person name="Wernegreen J.J."/>
            <person name="Sandstroem J.P."/>
            <person name="Moran N.A."/>
            <person name="Andersson S.G.E."/>
        </authorList>
    </citation>
    <scope>NUCLEOTIDE SEQUENCE [LARGE SCALE GENOMIC DNA]</scope>
    <source>
        <strain>Sg</strain>
    </source>
</reference>
<keyword id="KW-0028">Amino-acid biosynthesis</keyword>
<keyword id="KW-0963">Cytoplasm</keyword>
<keyword id="KW-0220">Diaminopimelate biosynthesis</keyword>
<keyword id="KW-0457">Lysine biosynthesis</keyword>
<keyword id="KW-0520">NAD</keyword>
<keyword id="KW-0521">NADP</keyword>
<keyword id="KW-0560">Oxidoreductase</keyword>
<sequence>MKKKITRIAITGAMGRMGQVLIKEIQKNKNTVLTAALVKNNHPLIGQNIGEKIGIGKTSVSISSDINIEKNDFDVLIDFTKPSGTFYFLEQCYEFKKNMIIGTTGFSEKEIKTINSYAKKIALIKASNFSIGINLLYQLIQKTTKILGNTSDIDIIEYHHRNKIDIPSGTALSIGENISKVMNWELNKHSLYYTKGITKKIRETKKIGFSSIRSGNIIGKHTVLFSSSDEEIKITHSAFNRESFAKGAIEAAVWIHEKKHGLFNMNDILKDKF</sequence>
<protein>
    <recommendedName>
        <fullName evidence="1">4-hydroxy-tetrahydrodipicolinate reductase</fullName>
        <shortName evidence="1">HTPA reductase</shortName>
        <ecNumber evidence="1">1.17.1.8</ecNumber>
    </recommendedName>
</protein>
<dbReference type="EC" id="1.17.1.8" evidence="1"/>
<dbReference type="EMBL" id="AE013218">
    <property type="protein sequence ID" value="AAM67707.1"/>
    <property type="molecule type" value="Genomic_DNA"/>
</dbReference>
<dbReference type="RefSeq" id="WP_011053674.1">
    <property type="nucleotide sequence ID" value="NC_004061.1"/>
</dbReference>
<dbReference type="SMR" id="Q8K9Z5"/>
<dbReference type="STRING" id="198804.BUsg_139"/>
<dbReference type="GeneID" id="93003609"/>
<dbReference type="KEGG" id="bas:BUsg_139"/>
<dbReference type="eggNOG" id="COG0289">
    <property type="taxonomic scope" value="Bacteria"/>
</dbReference>
<dbReference type="HOGENOM" id="CLU_047479_2_1_6"/>
<dbReference type="UniPathway" id="UPA00034">
    <property type="reaction ID" value="UER00018"/>
</dbReference>
<dbReference type="Proteomes" id="UP000000416">
    <property type="component" value="Chromosome"/>
</dbReference>
<dbReference type="GO" id="GO:0005829">
    <property type="term" value="C:cytosol"/>
    <property type="evidence" value="ECO:0007669"/>
    <property type="project" value="TreeGrafter"/>
</dbReference>
<dbReference type="GO" id="GO:0008839">
    <property type="term" value="F:4-hydroxy-tetrahydrodipicolinate reductase"/>
    <property type="evidence" value="ECO:0007669"/>
    <property type="project" value="UniProtKB-EC"/>
</dbReference>
<dbReference type="GO" id="GO:0051287">
    <property type="term" value="F:NAD binding"/>
    <property type="evidence" value="ECO:0007669"/>
    <property type="project" value="UniProtKB-UniRule"/>
</dbReference>
<dbReference type="GO" id="GO:0050661">
    <property type="term" value="F:NADP binding"/>
    <property type="evidence" value="ECO:0007669"/>
    <property type="project" value="UniProtKB-UniRule"/>
</dbReference>
<dbReference type="GO" id="GO:0016726">
    <property type="term" value="F:oxidoreductase activity, acting on CH or CH2 groups, NAD or NADP as acceptor"/>
    <property type="evidence" value="ECO:0007669"/>
    <property type="project" value="UniProtKB-UniRule"/>
</dbReference>
<dbReference type="GO" id="GO:0019877">
    <property type="term" value="P:diaminopimelate biosynthetic process"/>
    <property type="evidence" value="ECO:0007669"/>
    <property type="project" value="UniProtKB-UniRule"/>
</dbReference>
<dbReference type="GO" id="GO:0009089">
    <property type="term" value="P:lysine biosynthetic process via diaminopimelate"/>
    <property type="evidence" value="ECO:0007669"/>
    <property type="project" value="UniProtKB-UniRule"/>
</dbReference>
<dbReference type="CDD" id="cd02274">
    <property type="entry name" value="DHDPR_N"/>
    <property type="match status" value="1"/>
</dbReference>
<dbReference type="Gene3D" id="3.30.360.10">
    <property type="entry name" value="Dihydrodipicolinate Reductase, domain 2"/>
    <property type="match status" value="1"/>
</dbReference>
<dbReference type="Gene3D" id="3.40.50.720">
    <property type="entry name" value="NAD(P)-binding Rossmann-like Domain"/>
    <property type="match status" value="1"/>
</dbReference>
<dbReference type="HAMAP" id="MF_00102">
    <property type="entry name" value="DapB"/>
    <property type="match status" value="1"/>
</dbReference>
<dbReference type="InterPro" id="IPR022663">
    <property type="entry name" value="DapB_C"/>
</dbReference>
<dbReference type="InterPro" id="IPR000846">
    <property type="entry name" value="DapB_N"/>
</dbReference>
<dbReference type="InterPro" id="IPR022664">
    <property type="entry name" value="DapB_N_CS"/>
</dbReference>
<dbReference type="InterPro" id="IPR023940">
    <property type="entry name" value="DHDPR_bac"/>
</dbReference>
<dbReference type="InterPro" id="IPR036291">
    <property type="entry name" value="NAD(P)-bd_dom_sf"/>
</dbReference>
<dbReference type="NCBIfam" id="TIGR00036">
    <property type="entry name" value="dapB"/>
    <property type="match status" value="1"/>
</dbReference>
<dbReference type="PANTHER" id="PTHR20836:SF0">
    <property type="entry name" value="4-HYDROXY-TETRAHYDRODIPICOLINATE REDUCTASE 1, CHLOROPLASTIC-RELATED"/>
    <property type="match status" value="1"/>
</dbReference>
<dbReference type="PANTHER" id="PTHR20836">
    <property type="entry name" value="DIHYDRODIPICOLINATE REDUCTASE"/>
    <property type="match status" value="1"/>
</dbReference>
<dbReference type="Pfam" id="PF05173">
    <property type="entry name" value="DapB_C"/>
    <property type="match status" value="1"/>
</dbReference>
<dbReference type="Pfam" id="PF01113">
    <property type="entry name" value="DapB_N"/>
    <property type="match status" value="1"/>
</dbReference>
<dbReference type="PIRSF" id="PIRSF000161">
    <property type="entry name" value="DHPR"/>
    <property type="match status" value="1"/>
</dbReference>
<dbReference type="SUPFAM" id="SSF55347">
    <property type="entry name" value="Glyceraldehyde-3-phosphate dehydrogenase-like, C-terminal domain"/>
    <property type="match status" value="1"/>
</dbReference>
<dbReference type="SUPFAM" id="SSF51735">
    <property type="entry name" value="NAD(P)-binding Rossmann-fold domains"/>
    <property type="match status" value="1"/>
</dbReference>
<dbReference type="PROSITE" id="PS01298">
    <property type="entry name" value="DAPB"/>
    <property type="match status" value="1"/>
</dbReference>
<comment type="function">
    <text evidence="1">Catalyzes the conversion of 4-hydroxy-tetrahydrodipicolinate (HTPA) to tetrahydrodipicolinate.</text>
</comment>
<comment type="catalytic activity">
    <reaction evidence="1">
        <text>(S)-2,3,4,5-tetrahydrodipicolinate + NAD(+) + H2O = (2S,4S)-4-hydroxy-2,3,4,5-tetrahydrodipicolinate + NADH + H(+)</text>
        <dbReference type="Rhea" id="RHEA:35323"/>
        <dbReference type="ChEBI" id="CHEBI:15377"/>
        <dbReference type="ChEBI" id="CHEBI:15378"/>
        <dbReference type="ChEBI" id="CHEBI:16845"/>
        <dbReference type="ChEBI" id="CHEBI:57540"/>
        <dbReference type="ChEBI" id="CHEBI:57945"/>
        <dbReference type="ChEBI" id="CHEBI:67139"/>
        <dbReference type="EC" id="1.17.1.8"/>
    </reaction>
</comment>
<comment type="catalytic activity">
    <reaction evidence="1">
        <text>(S)-2,3,4,5-tetrahydrodipicolinate + NADP(+) + H2O = (2S,4S)-4-hydroxy-2,3,4,5-tetrahydrodipicolinate + NADPH + H(+)</text>
        <dbReference type="Rhea" id="RHEA:35331"/>
        <dbReference type="ChEBI" id="CHEBI:15377"/>
        <dbReference type="ChEBI" id="CHEBI:15378"/>
        <dbReference type="ChEBI" id="CHEBI:16845"/>
        <dbReference type="ChEBI" id="CHEBI:57783"/>
        <dbReference type="ChEBI" id="CHEBI:58349"/>
        <dbReference type="ChEBI" id="CHEBI:67139"/>
        <dbReference type="EC" id="1.17.1.8"/>
    </reaction>
</comment>
<comment type="pathway">
    <text evidence="1">Amino-acid biosynthesis; L-lysine biosynthesis via DAP pathway; (S)-tetrahydrodipicolinate from L-aspartate: step 4/4.</text>
</comment>
<comment type="subunit">
    <text evidence="1">Homotetramer.</text>
</comment>
<comment type="subcellular location">
    <subcellularLocation>
        <location evidence="1">Cytoplasm</location>
    </subcellularLocation>
</comment>
<comment type="similarity">
    <text evidence="1">Belongs to the DapB family.</text>
</comment>
<comment type="caution">
    <text evidence="2">Was originally thought to be a dihydrodipicolinate reductase (DHDPR), catalyzing the conversion of dihydrodipicolinate to tetrahydrodipicolinate. However, it was shown in E.coli that the substrate of the enzymatic reaction is not dihydrodipicolinate (DHDP) but in fact (2S,4S)-4-hydroxy-2,3,4,5-tetrahydrodipicolinic acid (HTPA), the product released by the DapA-catalyzed reaction.</text>
</comment>
<proteinExistence type="inferred from homology"/>
<feature type="chain" id="PRO_0000141420" description="4-hydroxy-tetrahydrodipicolinate reductase">
    <location>
        <begin position="1"/>
        <end position="273"/>
    </location>
</feature>
<feature type="active site" description="Proton donor/acceptor" evidence="1">
    <location>
        <position position="159"/>
    </location>
</feature>
<feature type="active site" description="Proton donor" evidence="1">
    <location>
        <position position="163"/>
    </location>
</feature>
<feature type="binding site" evidence="1">
    <location>
        <begin position="12"/>
        <end position="17"/>
    </location>
    <ligand>
        <name>NAD(+)</name>
        <dbReference type="ChEBI" id="CHEBI:57540"/>
    </ligand>
</feature>
<feature type="binding site" evidence="1">
    <location>
        <position position="39"/>
    </location>
    <ligand>
        <name>NADP(+)</name>
        <dbReference type="ChEBI" id="CHEBI:58349"/>
    </ligand>
</feature>
<feature type="binding site" evidence="1">
    <location>
        <begin position="102"/>
        <end position="104"/>
    </location>
    <ligand>
        <name>NAD(+)</name>
        <dbReference type="ChEBI" id="CHEBI:57540"/>
    </ligand>
</feature>
<feature type="binding site" evidence="1">
    <location>
        <begin position="126"/>
        <end position="129"/>
    </location>
    <ligand>
        <name>NAD(+)</name>
        <dbReference type="ChEBI" id="CHEBI:57540"/>
    </ligand>
</feature>
<feature type="binding site" evidence="1">
    <location>
        <position position="160"/>
    </location>
    <ligand>
        <name>(S)-2,3,4,5-tetrahydrodipicolinate</name>
        <dbReference type="ChEBI" id="CHEBI:16845"/>
    </ligand>
</feature>
<feature type="binding site" evidence="1">
    <location>
        <begin position="169"/>
        <end position="170"/>
    </location>
    <ligand>
        <name>(S)-2,3,4,5-tetrahydrodipicolinate</name>
        <dbReference type="ChEBI" id="CHEBI:16845"/>
    </ligand>
</feature>